<reference key="1">
    <citation type="journal article" date="2006" name="Proc. Natl. Acad. Sci. U.S.A.">
        <title>Burkholderia xenovorans LB400 harbors a multi-replicon, 9.73-Mbp genome shaped for versatility.</title>
        <authorList>
            <person name="Chain P.S.G."/>
            <person name="Denef V.J."/>
            <person name="Konstantinidis K.T."/>
            <person name="Vergez L.M."/>
            <person name="Agullo L."/>
            <person name="Reyes V.L."/>
            <person name="Hauser L."/>
            <person name="Cordova M."/>
            <person name="Gomez L."/>
            <person name="Gonzalez M."/>
            <person name="Land M."/>
            <person name="Lao V."/>
            <person name="Larimer F."/>
            <person name="LiPuma J.J."/>
            <person name="Mahenthiralingam E."/>
            <person name="Malfatti S.A."/>
            <person name="Marx C.J."/>
            <person name="Parnell J.J."/>
            <person name="Ramette A."/>
            <person name="Richardson P."/>
            <person name="Seeger M."/>
            <person name="Smith D."/>
            <person name="Spilker T."/>
            <person name="Sul W.J."/>
            <person name="Tsoi T.V."/>
            <person name="Ulrich L.E."/>
            <person name="Zhulin I.B."/>
            <person name="Tiedje J.M."/>
        </authorList>
    </citation>
    <scope>NUCLEOTIDE SEQUENCE [LARGE SCALE GENOMIC DNA]</scope>
    <source>
        <strain>LB400</strain>
    </source>
</reference>
<name>RLMH_PARXL</name>
<organism>
    <name type="scientific">Paraburkholderia xenovorans (strain LB400)</name>
    <dbReference type="NCBI Taxonomy" id="266265"/>
    <lineage>
        <taxon>Bacteria</taxon>
        <taxon>Pseudomonadati</taxon>
        <taxon>Pseudomonadota</taxon>
        <taxon>Betaproteobacteria</taxon>
        <taxon>Burkholderiales</taxon>
        <taxon>Burkholderiaceae</taxon>
        <taxon>Paraburkholderia</taxon>
    </lineage>
</organism>
<gene>
    <name evidence="1" type="primary">rlmH</name>
    <name type="ordered locus">Bxeno_A1180</name>
    <name type="ORF">Bxe_A3264</name>
</gene>
<evidence type="ECO:0000255" key="1">
    <source>
        <dbReference type="HAMAP-Rule" id="MF_00658"/>
    </source>
</evidence>
<feature type="chain" id="PRO_0000260542" description="Ribosomal RNA large subunit methyltransferase H">
    <location>
        <begin position="1"/>
        <end position="156"/>
    </location>
</feature>
<feature type="binding site" evidence="1">
    <location>
        <position position="73"/>
    </location>
    <ligand>
        <name>S-adenosyl-L-methionine</name>
        <dbReference type="ChEBI" id="CHEBI:59789"/>
    </ligand>
</feature>
<feature type="binding site" evidence="1">
    <location>
        <position position="104"/>
    </location>
    <ligand>
        <name>S-adenosyl-L-methionine</name>
        <dbReference type="ChEBI" id="CHEBI:59789"/>
    </ligand>
</feature>
<feature type="binding site" evidence="1">
    <location>
        <begin position="123"/>
        <end position="128"/>
    </location>
    <ligand>
        <name>S-adenosyl-L-methionine</name>
        <dbReference type="ChEBI" id="CHEBI:59789"/>
    </ligand>
</feature>
<comment type="function">
    <text evidence="1">Specifically methylates the pseudouridine at position 1915 (m3Psi1915) in 23S rRNA.</text>
</comment>
<comment type="catalytic activity">
    <reaction evidence="1">
        <text>pseudouridine(1915) in 23S rRNA + S-adenosyl-L-methionine = N(3)-methylpseudouridine(1915) in 23S rRNA + S-adenosyl-L-homocysteine + H(+)</text>
        <dbReference type="Rhea" id="RHEA:42752"/>
        <dbReference type="Rhea" id="RHEA-COMP:10221"/>
        <dbReference type="Rhea" id="RHEA-COMP:10222"/>
        <dbReference type="ChEBI" id="CHEBI:15378"/>
        <dbReference type="ChEBI" id="CHEBI:57856"/>
        <dbReference type="ChEBI" id="CHEBI:59789"/>
        <dbReference type="ChEBI" id="CHEBI:65314"/>
        <dbReference type="ChEBI" id="CHEBI:74486"/>
        <dbReference type="EC" id="2.1.1.177"/>
    </reaction>
</comment>
<comment type="subunit">
    <text evidence="1">Homodimer.</text>
</comment>
<comment type="subcellular location">
    <subcellularLocation>
        <location evidence="1">Cytoplasm</location>
    </subcellularLocation>
</comment>
<comment type="similarity">
    <text evidence="1">Belongs to the RNA methyltransferase RlmH family.</text>
</comment>
<keyword id="KW-0963">Cytoplasm</keyword>
<keyword id="KW-0489">Methyltransferase</keyword>
<keyword id="KW-1185">Reference proteome</keyword>
<keyword id="KW-0698">rRNA processing</keyword>
<keyword id="KW-0949">S-adenosyl-L-methionine</keyword>
<keyword id="KW-0808">Transferase</keyword>
<accession>Q142M1</accession>
<dbReference type="EC" id="2.1.1.177" evidence="1"/>
<dbReference type="EMBL" id="CP000270">
    <property type="protein sequence ID" value="ABE29718.1"/>
    <property type="molecule type" value="Genomic_DNA"/>
</dbReference>
<dbReference type="RefSeq" id="WP_011487451.1">
    <property type="nucleotide sequence ID" value="NC_007951.1"/>
</dbReference>
<dbReference type="SMR" id="Q142M1"/>
<dbReference type="STRING" id="266265.Bxe_A3264"/>
<dbReference type="KEGG" id="bxb:DR64_967"/>
<dbReference type="KEGG" id="bxe:Bxe_A3264"/>
<dbReference type="PATRIC" id="fig|266265.5.peg.1216"/>
<dbReference type="eggNOG" id="COG1576">
    <property type="taxonomic scope" value="Bacteria"/>
</dbReference>
<dbReference type="OrthoDB" id="9806643at2"/>
<dbReference type="Proteomes" id="UP000001817">
    <property type="component" value="Chromosome 1"/>
</dbReference>
<dbReference type="GO" id="GO:0005737">
    <property type="term" value="C:cytoplasm"/>
    <property type="evidence" value="ECO:0007669"/>
    <property type="project" value="UniProtKB-SubCell"/>
</dbReference>
<dbReference type="GO" id="GO:0070038">
    <property type="term" value="F:rRNA (pseudouridine-N3-)-methyltransferase activity"/>
    <property type="evidence" value="ECO:0007669"/>
    <property type="project" value="UniProtKB-UniRule"/>
</dbReference>
<dbReference type="CDD" id="cd18081">
    <property type="entry name" value="RlmH-like"/>
    <property type="match status" value="1"/>
</dbReference>
<dbReference type="Gene3D" id="3.40.1280.10">
    <property type="match status" value="1"/>
</dbReference>
<dbReference type="HAMAP" id="MF_00658">
    <property type="entry name" value="23SrRNA_methyltr_H"/>
    <property type="match status" value="1"/>
</dbReference>
<dbReference type="InterPro" id="IPR029028">
    <property type="entry name" value="Alpha/beta_knot_MTases"/>
</dbReference>
<dbReference type="InterPro" id="IPR003742">
    <property type="entry name" value="RlmH-like"/>
</dbReference>
<dbReference type="InterPro" id="IPR029026">
    <property type="entry name" value="tRNA_m1G_MTases_N"/>
</dbReference>
<dbReference type="NCBIfam" id="NF000986">
    <property type="entry name" value="PRK00103.1-4"/>
    <property type="match status" value="1"/>
</dbReference>
<dbReference type="NCBIfam" id="TIGR00246">
    <property type="entry name" value="tRNA_RlmH_YbeA"/>
    <property type="match status" value="1"/>
</dbReference>
<dbReference type="PANTHER" id="PTHR33603">
    <property type="entry name" value="METHYLTRANSFERASE"/>
    <property type="match status" value="1"/>
</dbReference>
<dbReference type="PANTHER" id="PTHR33603:SF1">
    <property type="entry name" value="RIBOSOMAL RNA LARGE SUBUNIT METHYLTRANSFERASE H"/>
    <property type="match status" value="1"/>
</dbReference>
<dbReference type="Pfam" id="PF02590">
    <property type="entry name" value="SPOUT_MTase"/>
    <property type="match status" value="1"/>
</dbReference>
<dbReference type="PIRSF" id="PIRSF004505">
    <property type="entry name" value="MT_bac"/>
    <property type="match status" value="1"/>
</dbReference>
<dbReference type="SUPFAM" id="SSF75217">
    <property type="entry name" value="alpha/beta knot"/>
    <property type="match status" value="1"/>
</dbReference>
<protein>
    <recommendedName>
        <fullName evidence="1">Ribosomal RNA large subunit methyltransferase H</fullName>
        <ecNumber evidence="1">2.1.1.177</ecNumber>
    </recommendedName>
    <alternativeName>
        <fullName evidence="1">23S rRNA (pseudouridine1915-N3)-methyltransferase</fullName>
    </alternativeName>
    <alternativeName>
        <fullName evidence="1">23S rRNA m3Psi1915 methyltransferase</fullName>
    </alternativeName>
    <alternativeName>
        <fullName evidence="1">rRNA (pseudouridine-N3-)-methyltransferase RlmH</fullName>
    </alternativeName>
</protein>
<proteinExistence type="inferred from homology"/>
<sequence>MKLHILAVGHKMPDWIATGFDEYAKRMPPELRIELREIKPEQRSSGRPAESVMAAERIRIEAALPKNARIVALDERGKDWTTMQLAGALPSWQQDGRDVAFLIGGADGLDPDLKARADMLLRVSSLTLPHAMVRVLLAEQLYRAWTITQNHPYHRV</sequence>